<accession>Q99PD7</accession>
<accession>B1AWL7</accession>
<accession>Q99JR2</accession>
<accession>Q99PD8</accession>
<comment type="function">
    <text evidence="4">Calcium, potassium:sodium antiporter that transports 1 Ca(2+) and 1 K(+) in exchange for 4 Na(+).</text>
</comment>
<comment type="catalytic activity">
    <reaction evidence="1">
        <text>Ca(2+)(out) + K(+)(out) + 4 Na(+)(in) = Ca(2+)(in) + K(+)(in) + 4 Na(+)(out)</text>
        <dbReference type="Rhea" id="RHEA:69967"/>
        <dbReference type="ChEBI" id="CHEBI:29101"/>
        <dbReference type="ChEBI" id="CHEBI:29103"/>
        <dbReference type="ChEBI" id="CHEBI:29108"/>
    </reaction>
</comment>
<comment type="subcellular location">
    <subcellularLocation>
        <location evidence="1">Cell membrane</location>
        <topology evidence="2">Multi-pass membrane protein</topology>
    </subcellularLocation>
</comment>
<comment type="tissue specificity">
    <text evidence="5">Abundant in the brain. Highest levels found in selected thalamic nuclei, hippocampal CA1 neurons and in layer IV of the cerebral cortex. Expressed in dental tissues.</text>
</comment>
<comment type="similarity">
    <text evidence="7">Belongs to the Ca(2+):cation antiporter (CaCA) (TC 2.A.19) family. SLC24A subfamily.</text>
</comment>
<keyword id="KW-0050">Antiport</keyword>
<keyword id="KW-0106">Calcium</keyword>
<keyword id="KW-0109">Calcium transport</keyword>
<keyword id="KW-1003">Cell membrane</keyword>
<keyword id="KW-0325">Glycoprotein</keyword>
<keyword id="KW-0406">Ion transport</keyword>
<keyword id="KW-0472">Membrane</keyword>
<keyword id="KW-0597">Phosphoprotein</keyword>
<keyword id="KW-0630">Potassium</keyword>
<keyword id="KW-0633">Potassium transport</keyword>
<keyword id="KW-1185">Reference proteome</keyword>
<keyword id="KW-0677">Repeat</keyword>
<keyword id="KW-0732">Signal</keyword>
<keyword id="KW-0915">Sodium</keyword>
<keyword id="KW-0739">Sodium transport</keyword>
<keyword id="KW-0769">Symport</keyword>
<keyword id="KW-0812">Transmembrane</keyword>
<keyword id="KW-1133">Transmembrane helix</keyword>
<keyword id="KW-0813">Transport</keyword>
<reference key="1">
    <citation type="journal article" date="2001" name="J. Biol. Chem.">
        <title>Molecular cloning of a third member of the potassium-dependent sodium-calcium exchanger gene family, NCKX3.</title>
        <authorList>
            <person name="Kraev A."/>
            <person name="Quednau B.D."/>
            <person name="Leach S."/>
            <person name="Li X.-F."/>
            <person name="Dong H."/>
            <person name="Winkfein R."/>
            <person name="Perizzolo M."/>
            <person name="Cai X."/>
            <person name="Yang R."/>
            <person name="Philipson K.D."/>
            <person name="Lytton J."/>
        </authorList>
    </citation>
    <scope>NUCLEOTIDE SEQUENCE [GENOMIC DNA / MRNA]</scope>
    <scope>FUNCTION</scope>
    <source>
        <strain>129/SvJ</strain>
        <strain>CD-1</strain>
        <tissue>Brain</tissue>
        <tissue>Embryonic stem cell</tissue>
    </source>
</reference>
<reference key="2">
    <citation type="journal article" date="2009" name="PLoS Biol.">
        <title>Lineage-specific biology revealed by a finished genome assembly of the mouse.</title>
        <authorList>
            <person name="Church D.M."/>
            <person name="Goodstadt L."/>
            <person name="Hillier L.W."/>
            <person name="Zody M.C."/>
            <person name="Goldstein S."/>
            <person name="She X."/>
            <person name="Bult C.J."/>
            <person name="Agarwala R."/>
            <person name="Cherry J.L."/>
            <person name="DiCuccio M."/>
            <person name="Hlavina W."/>
            <person name="Kapustin Y."/>
            <person name="Meric P."/>
            <person name="Maglott D."/>
            <person name="Birtle Z."/>
            <person name="Marques A.C."/>
            <person name="Graves T."/>
            <person name="Zhou S."/>
            <person name="Teague B."/>
            <person name="Potamousis K."/>
            <person name="Churas C."/>
            <person name="Place M."/>
            <person name="Herschleb J."/>
            <person name="Runnheim R."/>
            <person name="Forrest D."/>
            <person name="Amos-Landgraf J."/>
            <person name="Schwartz D.C."/>
            <person name="Cheng Z."/>
            <person name="Lindblad-Toh K."/>
            <person name="Eichler E.E."/>
            <person name="Ponting C.P."/>
        </authorList>
    </citation>
    <scope>NUCLEOTIDE SEQUENCE [LARGE SCALE GENOMIC DNA]</scope>
    <source>
        <strain>C57BL/6J</strain>
    </source>
</reference>
<reference key="3">
    <citation type="journal article" date="2004" name="Genome Res.">
        <title>The status, quality, and expansion of the NIH full-length cDNA project: the Mammalian Gene Collection (MGC).</title>
        <authorList>
            <consortium name="The MGC Project Team"/>
        </authorList>
    </citation>
    <scope>NUCLEOTIDE SEQUENCE [LARGE SCALE MRNA] OF 323-645</scope>
    <source>
        <tissue>Mammary tumor</tissue>
    </source>
</reference>
<reference key="4">
    <citation type="journal article" date="2010" name="Cell">
        <title>A tissue-specific atlas of mouse protein phosphorylation and expression.</title>
        <authorList>
            <person name="Huttlin E.L."/>
            <person name="Jedrychowski M.P."/>
            <person name="Elias J.E."/>
            <person name="Goswami T."/>
            <person name="Rad R."/>
            <person name="Beausoleil S.A."/>
            <person name="Villen J."/>
            <person name="Haas W."/>
            <person name="Sowa M.E."/>
            <person name="Gygi S.P."/>
        </authorList>
    </citation>
    <scope>PHOSPHORYLATION [LARGE SCALE ANALYSIS] AT SER-307</scope>
    <scope>IDENTIFICATION BY MASS SPECTROMETRY [LARGE SCALE ANALYSIS]</scope>
    <source>
        <tissue>Brain</tissue>
        <tissue>Brown adipose tissue</tissue>
        <tissue>Lung</tissue>
        <tissue>Spleen</tissue>
        <tissue>Testis</tissue>
    </source>
</reference>
<reference key="5">
    <citation type="journal article" date="2012" name="Cells Tissues Organs">
        <title>Expression of the sodium/calcium/potassium exchanger, NCKX4, in ameloblasts.</title>
        <authorList>
            <person name="Hu P."/>
            <person name="Lacruz R.S."/>
            <person name="Smith C.E."/>
            <person name="Smith S.M."/>
            <person name="Kurtz I."/>
            <person name="Paine M.L."/>
        </authorList>
    </citation>
    <scope>TISSUE SPECIFICITY</scope>
</reference>
<proteinExistence type="evidence at protein level"/>
<name>NCKX3_MOUSE</name>
<evidence type="ECO:0000250" key="1">
    <source>
        <dbReference type="UniProtKB" id="Q9HC58"/>
    </source>
</evidence>
<evidence type="ECO:0000255" key="2"/>
<evidence type="ECO:0000256" key="3">
    <source>
        <dbReference type="SAM" id="MobiDB-lite"/>
    </source>
</evidence>
<evidence type="ECO:0000269" key="4">
    <source>
    </source>
</evidence>
<evidence type="ECO:0000269" key="5">
    <source>
    </source>
</evidence>
<evidence type="ECO:0000303" key="6">
    <source>
    </source>
</evidence>
<evidence type="ECO:0000305" key="7"/>
<evidence type="ECO:0007744" key="8">
    <source>
    </source>
</evidence>
<feature type="signal peptide" evidence="2">
    <location>
        <begin position="1"/>
        <end position="43"/>
    </location>
</feature>
<feature type="chain" id="PRO_0000019371" description="Sodium/potassium/calcium exchanger 3">
    <location>
        <begin position="44"/>
        <end position="645"/>
    </location>
</feature>
<feature type="topological domain" description="Extracellular" evidence="2">
    <location>
        <begin position="44"/>
        <end position="106"/>
    </location>
</feature>
<feature type="transmembrane region" description="Helical" evidence="2">
    <location>
        <begin position="107"/>
        <end position="127"/>
    </location>
</feature>
<feature type="topological domain" description="Cytoplasmic" evidence="2">
    <location>
        <begin position="128"/>
        <end position="151"/>
    </location>
</feature>
<feature type="transmembrane region" description="Helical" evidence="2">
    <location>
        <begin position="152"/>
        <end position="172"/>
    </location>
</feature>
<feature type="topological domain" description="Extracellular" evidence="2">
    <location>
        <begin position="173"/>
        <end position="181"/>
    </location>
</feature>
<feature type="transmembrane region" description="Helical" evidence="2">
    <location>
        <begin position="182"/>
        <end position="202"/>
    </location>
</feature>
<feature type="topological domain" description="Cytoplasmic" evidence="2">
    <location>
        <begin position="203"/>
        <end position="209"/>
    </location>
</feature>
<feature type="transmembrane region" description="Helical" evidence="2">
    <location>
        <begin position="210"/>
        <end position="230"/>
    </location>
</feature>
<feature type="topological domain" description="Extracellular" evidence="2">
    <location>
        <begin position="231"/>
        <end position="234"/>
    </location>
</feature>
<feature type="transmembrane region" description="Helical" evidence="2">
    <location>
        <begin position="235"/>
        <end position="255"/>
    </location>
</feature>
<feature type="topological domain" description="Cytoplasmic" evidence="2">
    <location>
        <begin position="256"/>
        <end position="486"/>
    </location>
</feature>
<feature type="transmembrane region" description="Helical" evidence="2">
    <location>
        <begin position="487"/>
        <end position="507"/>
    </location>
</feature>
<feature type="topological domain" description="Extracellular" evidence="2">
    <location>
        <begin position="508"/>
        <end position="512"/>
    </location>
</feature>
<feature type="transmembrane region" description="Helical" evidence="2">
    <location>
        <begin position="513"/>
        <end position="533"/>
    </location>
</feature>
<feature type="topological domain" description="Cytoplasmic" evidence="2">
    <location>
        <begin position="534"/>
        <end position="551"/>
    </location>
</feature>
<feature type="transmembrane region" description="Helical" evidence="2">
    <location>
        <begin position="552"/>
        <end position="572"/>
    </location>
</feature>
<feature type="topological domain" description="Extracellular" evidence="2">
    <location>
        <begin position="573"/>
        <end position="582"/>
    </location>
</feature>
<feature type="transmembrane region" description="Helical" evidence="2">
    <location>
        <begin position="583"/>
        <end position="603"/>
    </location>
</feature>
<feature type="topological domain" description="Cytoplasmic" evidence="2">
    <location>
        <begin position="604"/>
        <end position="617"/>
    </location>
</feature>
<feature type="transmembrane region" description="Helical" evidence="2">
    <location>
        <begin position="618"/>
        <end position="638"/>
    </location>
</feature>
<feature type="topological domain" description="Extracellular" evidence="2">
    <location>
        <begin position="639"/>
        <end position="645"/>
    </location>
</feature>
<feature type="repeat" description="Alpha-1">
    <location>
        <begin position="148"/>
        <end position="188"/>
    </location>
</feature>
<feature type="repeat" description="Alpha-2">
    <location>
        <begin position="520"/>
        <end position="551"/>
    </location>
</feature>
<feature type="region of interest" description="Disordered" evidence="3">
    <location>
        <begin position="379"/>
        <end position="398"/>
    </location>
</feature>
<feature type="region of interest" description="Disordered" evidence="3">
    <location>
        <begin position="404"/>
        <end position="442"/>
    </location>
</feature>
<feature type="compositionally biased region" description="Acidic residues" evidence="3">
    <location>
        <begin position="404"/>
        <end position="435"/>
    </location>
</feature>
<feature type="modified residue" description="Phosphoserine" evidence="8">
    <location>
        <position position="307"/>
    </location>
</feature>
<feature type="glycosylation site" description="N-linked (GlcNAc...) asparagine" evidence="2">
    <location>
        <position position="70"/>
    </location>
</feature>
<feature type="glycosylation site" description="N-linked (GlcNAc...) asparagine" evidence="2">
    <location>
        <position position="85"/>
    </location>
</feature>
<feature type="sequence conflict" description="In Ref. 1; AAG60049." evidence="7" ref="1">
    <original>N</original>
    <variation>S</variation>
    <location>
        <position position="422"/>
    </location>
</feature>
<sequence>MPPPGDQDCARRRSRRRRRDLLLSQLCFLASVALLLWSLSSLREQKELDLMDLIGEDRKWMVGRKLMQVNDTLTSEDAGLQSSKNCTEPALHEFPRDIFSNEDRRQGAVVLHVLCAMYMFYALAIVCDDFFVPSLEKICERLHLSEDVAGATFMAAGSSAPELFTSVIGVFITKGDVGVGTIVGSAVFNILCIIGVCGLFAGQVVALSSWCLLRDSIYYTLSVVALIVFIYDEKVSWWESLVLVLMYLIYIVIMKYNACIHQCFERRTKGAGNMVNGLANNAEIDDSSNCDATVVLLKKANFHRKASVIMVDELLSAYPHQLSFSEAGLRIMITSHFPPKTRLSMASRMLINERQRLINSRAYTNGESEVAIKIPIKHTVENGTGPSSAPDRGVNGTRRDDIVAETDNETENENEDNENNENDEEEEEDEDDDEGPYTPFDPPSGKLETVKWAFTWPLSFVLYFTVPNCNKPHWEKWFMVTFASSTLWIAAFSYMMVWMVTIIGYTLGIPDVIMGITFLAAGTSVPDCMASLIVARQGMGDMAVSNSIGSNVFDILIGLGLPWALQTLAVDYGSYIRLNSRGLIYSVGLLLASVFVTVFGVHLNKWQLDKKLGCGCLFLYGVFLCFSIMTEFNVFTFVNLPMCGD</sequence>
<protein>
    <recommendedName>
        <fullName>Sodium/potassium/calcium exchanger 3</fullName>
    </recommendedName>
    <alternativeName>
        <fullName evidence="6">Na(+)/K(+)/Ca(2+)-exchange protein 3</fullName>
    </alternativeName>
    <alternativeName>
        <fullName>Solute carrier family 24 member 3</fullName>
    </alternativeName>
</protein>
<gene>
    <name type="primary">Slc24a3</name>
    <name evidence="6" type="synonym">Nckx3</name>
</gene>
<dbReference type="EMBL" id="AF314821">
    <property type="protein sequence ID" value="AAG60049.1"/>
    <property type="molecule type" value="mRNA"/>
</dbReference>
<dbReference type="EMBL" id="AF314822">
    <property type="protein sequence ID" value="AAG60050.1"/>
    <property type="molecule type" value="Genomic_DNA"/>
</dbReference>
<dbReference type="EMBL" id="AL772192">
    <property type="status" value="NOT_ANNOTATED_CDS"/>
    <property type="molecule type" value="Genomic_DNA"/>
</dbReference>
<dbReference type="EMBL" id="AL808117">
    <property type="status" value="NOT_ANNOTATED_CDS"/>
    <property type="molecule type" value="Genomic_DNA"/>
</dbReference>
<dbReference type="EMBL" id="AL824715">
    <property type="status" value="NOT_ANNOTATED_CDS"/>
    <property type="molecule type" value="Genomic_DNA"/>
</dbReference>
<dbReference type="EMBL" id="AL831783">
    <property type="status" value="NOT_ANNOTATED_CDS"/>
    <property type="molecule type" value="Genomic_DNA"/>
</dbReference>
<dbReference type="EMBL" id="BC005742">
    <property type="protein sequence ID" value="AAH05742.1"/>
    <property type="molecule type" value="mRNA"/>
</dbReference>
<dbReference type="CCDS" id="CCDS89560.1"/>
<dbReference type="RefSeq" id="NP_001343426.1">
    <property type="nucleotide sequence ID" value="NM_001356497.1"/>
</dbReference>
<dbReference type="FunCoup" id="Q99PD7">
    <property type="interactions" value="246"/>
</dbReference>
<dbReference type="STRING" id="10090.ENSMUSP00000079897"/>
<dbReference type="GlyCosmos" id="Q99PD7">
    <property type="glycosylation" value="2 sites, No reported glycans"/>
</dbReference>
<dbReference type="GlyGen" id="Q99PD7">
    <property type="glycosylation" value="3 sites, 3 N-linked glycans (3 sites)"/>
</dbReference>
<dbReference type="iPTMnet" id="Q99PD7"/>
<dbReference type="PhosphoSitePlus" id="Q99PD7"/>
<dbReference type="SwissPalm" id="Q99PD7"/>
<dbReference type="PaxDb" id="10090-ENSMUSP00000105634"/>
<dbReference type="ProteomicsDB" id="252926"/>
<dbReference type="Antibodypedia" id="65262">
    <property type="antibodies" value="114 antibodies from 20 providers"/>
</dbReference>
<dbReference type="Ensembl" id="ENSMUST00000110007.8">
    <property type="protein sequence ID" value="ENSMUSP00000105634.2"/>
    <property type="gene ID" value="ENSMUSG00000063873.11"/>
</dbReference>
<dbReference type="GeneID" id="94249"/>
<dbReference type="UCSC" id="uc008mrq.1">
    <property type="organism name" value="mouse"/>
</dbReference>
<dbReference type="AGR" id="MGI:2137513"/>
<dbReference type="MGI" id="MGI:2137513">
    <property type="gene designation" value="Slc24a3"/>
</dbReference>
<dbReference type="VEuPathDB" id="HostDB:ENSMUSG00000063873"/>
<dbReference type="eggNOG" id="KOG1307">
    <property type="taxonomic scope" value="Eukaryota"/>
</dbReference>
<dbReference type="GeneTree" id="ENSGT01030000234532"/>
<dbReference type="InParanoid" id="Q99PD7"/>
<dbReference type="PhylomeDB" id="Q99PD7"/>
<dbReference type="TreeFam" id="TF318759"/>
<dbReference type="Reactome" id="R-MMU-425561">
    <property type="pathway name" value="Sodium/Calcium exchangers"/>
</dbReference>
<dbReference type="ChiTaRS" id="Slc24a3">
    <property type="organism name" value="mouse"/>
</dbReference>
<dbReference type="PRO" id="PR:Q99PD7"/>
<dbReference type="Proteomes" id="UP000000589">
    <property type="component" value="Chromosome 2"/>
</dbReference>
<dbReference type="RNAct" id="Q99PD7">
    <property type="molecule type" value="protein"/>
</dbReference>
<dbReference type="Bgee" id="ENSMUSG00000063873">
    <property type="expression patterns" value="Expressed in bed nucleus of stria terminalis and 234 other cell types or tissues"/>
</dbReference>
<dbReference type="ExpressionAtlas" id="Q99PD7">
    <property type="expression patterns" value="baseline and differential"/>
</dbReference>
<dbReference type="GO" id="GO:0071944">
    <property type="term" value="C:cell periphery"/>
    <property type="evidence" value="ECO:0000314"/>
    <property type="project" value="ARUK-UCL"/>
</dbReference>
<dbReference type="GO" id="GO:0005886">
    <property type="term" value="C:plasma membrane"/>
    <property type="evidence" value="ECO:0000304"/>
    <property type="project" value="MGI"/>
</dbReference>
<dbReference type="GO" id="GO:0008273">
    <property type="term" value="F:calcium, potassium:sodium antiporter activity"/>
    <property type="evidence" value="ECO:0000314"/>
    <property type="project" value="MGI"/>
</dbReference>
<dbReference type="GO" id="GO:0015293">
    <property type="term" value="F:symporter activity"/>
    <property type="evidence" value="ECO:0007669"/>
    <property type="project" value="UniProtKB-KW"/>
</dbReference>
<dbReference type="GO" id="GO:0030282">
    <property type="term" value="P:bone mineralization"/>
    <property type="evidence" value="ECO:0000315"/>
    <property type="project" value="ARUK-UCL"/>
</dbReference>
<dbReference type="GO" id="GO:0006874">
    <property type="term" value="P:intracellular calcium ion homeostasis"/>
    <property type="evidence" value="ECO:0000315"/>
    <property type="project" value="ARUK-UCL"/>
</dbReference>
<dbReference type="GO" id="GO:0010629">
    <property type="term" value="P:negative regulation of gene expression"/>
    <property type="evidence" value="ECO:0000315"/>
    <property type="project" value="ARUK-UCL"/>
</dbReference>
<dbReference type="GO" id="GO:0010628">
    <property type="term" value="P:positive regulation of gene expression"/>
    <property type="evidence" value="ECO:0000315"/>
    <property type="project" value="ARUK-UCL"/>
</dbReference>
<dbReference type="FunFam" id="1.20.1420.30:FF:000005">
    <property type="entry name" value="sodium/potassium/calcium exchanger 3 isoform X1"/>
    <property type="match status" value="1"/>
</dbReference>
<dbReference type="FunFam" id="1.20.1420.30:FF:000006">
    <property type="entry name" value="sodium/potassium/calcium exchanger 4 isoform X1"/>
    <property type="match status" value="1"/>
</dbReference>
<dbReference type="Gene3D" id="1.20.1420.30">
    <property type="entry name" value="NCX, central ion-binding region"/>
    <property type="match status" value="2"/>
</dbReference>
<dbReference type="InterPro" id="IPR004481">
    <property type="entry name" value="K/Na/Ca-exchanger"/>
</dbReference>
<dbReference type="InterPro" id="IPR004837">
    <property type="entry name" value="NaCa_Exmemb"/>
</dbReference>
<dbReference type="InterPro" id="IPR044880">
    <property type="entry name" value="NCX_ion-bd_dom_sf"/>
</dbReference>
<dbReference type="NCBIfam" id="TIGR00367">
    <property type="entry name" value="calcium/sodium antiporter"/>
    <property type="match status" value="1"/>
</dbReference>
<dbReference type="PANTHER" id="PTHR10846">
    <property type="entry name" value="SODIUM/POTASSIUM/CALCIUM EXCHANGER"/>
    <property type="match status" value="1"/>
</dbReference>
<dbReference type="PANTHER" id="PTHR10846:SF42">
    <property type="entry name" value="SODIUM_POTASSIUM_CALCIUM EXCHANGER 3"/>
    <property type="match status" value="1"/>
</dbReference>
<dbReference type="Pfam" id="PF01699">
    <property type="entry name" value="Na_Ca_ex"/>
    <property type="match status" value="2"/>
</dbReference>
<organism>
    <name type="scientific">Mus musculus</name>
    <name type="common">Mouse</name>
    <dbReference type="NCBI Taxonomy" id="10090"/>
    <lineage>
        <taxon>Eukaryota</taxon>
        <taxon>Metazoa</taxon>
        <taxon>Chordata</taxon>
        <taxon>Craniata</taxon>
        <taxon>Vertebrata</taxon>
        <taxon>Euteleostomi</taxon>
        <taxon>Mammalia</taxon>
        <taxon>Eutheria</taxon>
        <taxon>Euarchontoglires</taxon>
        <taxon>Glires</taxon>
        <taxon>Rodentia</taxon>
        <taxon>Myomorpha</taxon>
        <taxon>Muroidea</taxon>
        <taxon>Muridae</taxon>
        <taxon>Murinae</taxon>
        <taxon>Mus</taxon>
        <taxon>Mus</taxon>
    </lineage>
</organism>